<accession>P81262</accession>
<keyword id="KW-0903">Direct protein sequencing</keyword>
<keyword id="KW-1015">Disulfide bond</keyword>
<keyword id="KW-0646">Protease inhibitor</keyword>
<keyword id="KW-0677">Repeat</keyword>
<keyword id="KW-0964">Secreted</keyword>
<keyword id="KW-0722">Serine protease inhibitor</keyword>
<name>IPSG_PANUN</name>
<feature type="chain" id="PRO_0000073041" description="Double-headed protease inhibitor, submandibular gland">
    <location>
        <begin position="1"/>
        <end position="122"/>
    </location>
</feature>
<feature type="domain" description="Kazal-like 1" evidence="1">
    <location>
        <begin position="10"/>
        <end position="70"/>
    </location>
</feature>
<feature type="domain" description="Kazal-like 2" evidence="1">
    <location>
        <begin position="71"/>
        <end position="121"/>
    </location>
</feature>
<feature type="site" description="Reactive bond 1 for trypsin">
    <location>
        <begin position="30"/>
        <end position="31"/>
    </location>
</feature>
<feature type="site" description="Reactive bond 2 for elastase">
    <location>
        <begin position="81"/>
        <end position="82"/>
    </location>
</feature>
<feature type="disulfide bond" evidence="1">
    <location>
        <begin position="16"/>
        <end position="50"/>
    </location>
</feature>
<feature type="disulfide bond" evidence="1">
    <location>
        <begin position="28"/>
        <end position="47"/>
    </location>
</feature>
<feature type="disulfide bond" evidence="1">
    <location>
        <begin position="36"/>
        <end position="68"/>
    </location>
</feature>
<feature type="disulfide bond" evidence="1">
    <location>
        <begin position="72"/>
        <end position="101"/>
    </location>
</feature>
<feature type="disulfide bond" evidence="1">
    <location>
        <begin position="79"/>
        <end position="98"/>
    </location>
</feature>
<feature type="disulfide bond" evidence="1">
    <location>
        <begin position="87"/>
        <end position="119"/>
    </location>
</feature>
<dbReference type="SMR" id="P81262"/>
<dbReference type="MEROPS" id="I01.016"/>
<dbReference type="MEROPS" id="I01.017"/>
<dbReference type="GO" id="GO:0005576">
    <property type="term" value="C:extracellular region"/>
    <property type="evidence" value="ECO:0007669"/>
    <property type="project" value="UniProtKB-SubCell"/>
</dbReference>
<dbReference type="GO" id="GO:0004867">
    <property type="term" value="F:serine-type endopeptidase inhibitor activity"/>
    <property type="evidence" value="ECO:0007669"/>
    <property type="project" value="UniProtKB-KW"/>
</dbReference>
<dbReference type="CDD" id="cd00104">
    <property type="entry name" value="KAZAL_FS"/>
    <property type="match status" value="1"/>
</dbReference>
<dbReference type="FunFam" id="3.30.60.30:FF:000037">
    <property type="entry name" value="Ovomucoid"/>
    <property type="match status" value="1"/>
</dbReference>
<dbReference type="Gene3D" id="3.30.60.30">
    <property type="match status" value="2"/>
</dbReference>
<dbReference type="InterPro" id="IPR051597">
    <property type="entry name" value="Bifunctional_prot_inhibitor"/>
</dbReference>
<dbReference type="InterPro" id="IPR002350">
    <property type="entry name" value="Kazal_dom"/>
</dbReference>
<dbReference type="InterPro" id="IPR036058">
    <property type="entry name" value="Kazal_dom_sf"/>
</dbReference>
<dbReference type="InterPro" id="IPR001239">
    <property type="entry name" value="Prot_inh_Kazal-m"/>
</dbReference>
<dbReference type="PANTHER" id="PTHR47729:SF1">
    <property type="entry name" value="OVOMUCOID-LIKE-RELATED"/>
    <property type="match status" value="1"/>
</dbReference>
<dbReference type="PANTHER" id="PTHR47729">
    <property type="entry name" value="SERINE PEPTIDASE INHIBITOR, KAZAL TYPE 2, TANDEM DUPLICATE 1-RELATED"/>
    <property type="match status" value="1"/>
</dbReference>
<dbReference type="Pfam" id="PF00050">
    <property type="entry name" value="Kazal_1"/>
    <property type="match status" value="2"/>
</dbReference>
<dbReference type="PRINTS" id="PR00290">
    <property type="entry name" value="KAZALINHBTR"/>
</dbReference>
<dbReference type="SMART" id="SM00280">
    <property type="entry name" value="KAZAL"/>
    <property type="match status" value="2"/>
</dbReference>
<dbReference type="SUPFAM" id="SSF100895">
    <property type="entry name" value="Kazal-type serine protease inhibitors"/>
    <property type="match status" value="2"/>
</dbReference>
<dbReference type="PROSITE" id="PS00282">
    <property type="entry name" value="KAZAL_1"/>
    <property type="match status" value="2"/>
</dbReference>
<dbReference type="PROSITE" id="PS51465">
    <property type="entry name" value="KAZAL_2"/>
    <property type="match status" value="2"/>
</dbReference>
<protein>
    <recommendedName>
        <fullName>Double-headed protease inhibitor, submandibular gland</fullName>
    </recommendedName>
</protein>
<sequence length="122" mass="13471">APPPVGDQAGGRKVDCFKYNTKGSAFACTRHERPVCGTDHRTYSNECMFCMLTQNKGFGVRILQDNECDIECTQYSDMCTMEYLPLCGSDGKNYSNKCLFCNAVMGSRGALFLAKHGQCQSP</sequence>
<organism>
    <name type="scientific">Panthera uncia</name>
    <name type="common">Snow leopard</name>
    <name type="synonym">Uncia uncia</name>
    <dbReference type="NCBI Taxonomy" id="29064"/>
    <lineage>
        <taxon>Eukaryota</taxon>
        <taxon>Metazoa</taxon>
        <taxon>Chordata</taxon>
        <taxon>Craniata</taxon>
        <taxon>Vertebrata</taxon>
        <taxon>Euteleostomi</taxon>
        <taxon>Mammalia</taxon>
        <taxon>Eutheria</taxon>
        <taxon>Laurasiatheria</taxon>
        <taxon>Carnivora</taxon>
        <taxon>Feliformia</taxon>
        <taxon>Felidae</taxon>
        <taxon>Pantherinae</taxon>
        <taxon>Panthera</taxon>
    </lineage>
</organism>
<proteinExistence type="evidence at protein level"/>
<comment type="function">
    <text>This inhibitor is composed of two homologous actively inhibiting halves: one which inhibits trypsin, the other which inhibits elastase.</text>
</comment>
<comment type="subcellular location">
    <subcellularLocation>
        <location>Secreted</location>
    </subcellularLocation>
</comment>
<evidence type="ECO:0000255" key="1">
    <source>
        <dbReference type="PROSITE-ProRule" id="PRU00798"/>
    </source>
</evidence>
<reference key="1">
    <citation type="journal article" date="1993" name="Comp. Biochem. Physiol.">
        <title>Amino acid sequences of mammalian kazal-type proteinase inhibitors from salivary glands.</title>
        <authorList>
            <person name="Hochstrasser K."/>
            <person name="Wachter E."/>
            <person name="Reisinger P.W.M."/>
            <person name="Greim M."/>
            <person name="Albrecht G.J."/>
            <person name="Gebhard W."/>
        </authorList>
    </citation>
    <scope>PROTEIN SEQUENCE</scope>
</reference>